<accession>A1KYZ2</accession>
<gene>
    <name evidence="2" type="primary">TM1</name>
</gene>
<protein>
    <recommendedName>
        <fullName evidence="11 13">Tropomyosin</fullName>
    </recommendedName>
    <alternativeName>
        <fullName evidence="10">Major allergen Pen m 1</fullName>
    </alternativeName>
    <alternativeName>
        <fullName evidence="9 14">Tropomyosin, fast isoform</fullName>
        <shortName evidence="14">Tm-Penm-fast</shortName>
    </alternativeName>
    <allergenName evidence="12">Pen m 1.0101</allergenName>
</protein>
<comment type="function">
    <text evidence="3">Tropomyosin, in association with the troponin complex, plays a central role in the calcium dependent regulation of muscle contraction.</text>
</comment>
<comment type="subunit">
    <text evidence="1">Homodimer.</text>
</comment>
<comment type="tissue specificity">
    <text evidence="6 8">Expressed in muscle (at protein level).</text>
</comment>
<comment type="domain">
    <text evidence="12">The molecule is in a coiled coil structure that is formed by 2 polypeptide chains. The sequence exhibits a prominent seven-residues periodicity.</text>
</comment>
<comment type="allergen">
    <text evidence="6 7 8">Causes an allergic reaction in human. Binds to IgE of patients allergic to crustaceans (PubMed:17263503, PubMed:23840718, Ref.3). Heating increases IgE-binding activity. Cross-reacts with blue swimmer crab tropomyosin allergen Por p 1.0101. Recombinant protein causes activation of basophils (PubMed:23840718).</text>
</comment>
<comment type="similarity">
    <text evidence="4">Belongs to the tropomyosin family.</text>
</comment>
<sequence>MDAIKKKMQAMKLEKDNAMDRADTLEQQNKEANNRAEKSEEEVHNLQKRMQQLENDLDQVQESLLKANIQLVEKDKALSNAEGEVAALNRRIQLLEEDLERSEERLNTATTKLAEASQAADESERMRKVLENRSLSDEERMDALENQLKEARFLAEEADRKYDEVARKLAMVEADLERAEERAETGESKIVELEEELRVVGNNLKSLEVSEEKANQREEAYKEQIKTLTNKLKAAEARAEFAERSVQKLQKEVDRLEDELVNEKEKYKSITDELDQTFSELSGY</sequence>
<reference evidence="13" key="1">
    <citation type="submission" date="2004-11" db="EMBL/GenBank/DDBJ databases">
        <title>Cloning of tropomyosin from Penaeus monodon.</title>
        <authorList>
            <person name="Chew F.T."/>
            <person name="Nah H.L."/>
        </authorList>
    </citation>
    <scope>NUCLEOTIDE SEQUENCE [MRNA]</scope>
</reference>
<reference evidence="14" key="2">
    <citation type="journal article" date="2007" name="J. Agric. Food Chem.">
        <title>Molecular cloning of tropomyosins identified as allergens in six species of crustaceans.</title>
        <authorList>
            <person name="Motoyama K."/>
            <person name="Suma Y."/>
            <person name="Ishizaki S."/>
            <person name="Nagashima Y."/>
            <person name="Shiomi K."/>
        </authorList>
    </citation>
    <scope>NUCLEOTIDE SEQUENCE [MRNA]</scope>
    <scope>TISSUE SPECIFICITY</scope>
    <scope>ALLERGEN</scope>
    <source>
        <tissue evidence="6">Muscle</tissue>
    </source>
</reference>
<reference evidence="12" key="3">
    <citation type="journal article" date="2010" name="Rapid Commun. Mass Spectrom.">
        <title>Analysis of the allergenic proteins in black tiger prawn (Penaeus monodon) and characterization of the major allergen tropomyosin using mass spectrometry.</title>
        <authorList>
            <person name="Abdel Rahman A.M."/>
            <person name="Kamath S."/>
            <person name="Lopata A.L."/>
            <person name="Helleur R.J."/>
        </authorList>
    </citation>
    <scope>PROTEIN SEQUENCE</scope>
    <scope>TISSUE SPECIFICITY</scope>
    <scope>ALLERGEN</scope>
    <scope>ACETYLATION AT MET-1</scope>
    <source>
        <tissue evidence="8">Muscle</tissue>
    </source>
</reference>
<reference key="4">
    <citation type="journal article" date="2013" name="PLoS ONE">
        <title>IgE Reactivity of Blue Swimmer Crab (Portunus pelagicus) Tropomyosin, Por p 1, and Other Allergens; Cross-Reactivity with Black Tiger Prawn and Effects of Heating.</title>
        <authorList>
            <person name="Abramovitch J.B."/>
            <person name="Kamath S."/>
            <person name="Varese N."/>
            <person name="Zubrinich C."/>
            <person name="Lopata A.L."/>
            <person name="O'Hehir R.E."/>
            <person name="Rolland J.M."/>
        </authorList>
    </citation>
    <scope>ALLERGEN</scope>
</reference>
<proteinExistence type="evidence at protein level"/>
<feature type="chain" id="PRO_0000398788" description="Tropomyosin">
    <location>
        <begin position="1"/>
        <end position="284"/>
    </location>
</feature>
<feature type="region of interest" description="Disordered" evidence="5">
    <location>
        <begin position="1"/>
        <end position="51"/>
    </location>
</feature>
<feature type="coiled-coil region" evidence="2">
    <location>
        <begin position="1"/>
        <end position="284"/>
    </location>
</feature>
<feature type="compositionally biased region" description="Basic and acidic residues" evidence="5">
    <location>
        <begin position="12"/>
        <end position="45"/>
    </location>
</feature>
<feature type="modified residue" description="N-acetylmethionine" evidence="8">
    <location>
        <position position="1"/>
    </location>
</feature>
<name>TPM_PENMO</name>
<dbReference type="EMBL" id="AY827100">
    <property type="protein sequence ID" value="AAX37288.1"/>
    <property type="molecule type" value="mRNA"/>
</dbReference>
<dbReference type="EMBL" id="AB270629">
    <property type="protein sequence ID" value="BAF47262.1"/>
    <property type="molecule type" value="mRNA"/>
</dbReference>
<dbReference type="SMR" id="A1KYZ2"/>
<dbReference type="Allergome" id="3410">
    <property type="allergen name" value="Pen m 1.0101"/>
</dbReference>
<dbReference type="Allergome" id="972">
    <property type="allergen name" value="Pen m 1"/>
</dbReference>
<dbReference type="EnsemblMetazoa" id="XM_037944040.1">
    <property type="protein sequence ID" value="XP_037799968.1"/>
    <property type="gene ID" value="LOC119594951"/>
</dbReference>
<dbReference type="EnsemblMetazoa" id="XM_037944042.1">
    <property type="protein sequence ID" value="XP_037799970.1"/>
    <property type="gene ID" value="LOC119594951"/>
</dbReference>
<dbReference type="EnsemblMetazoa" id="XM_037944043.1">
    <property type="protein sequence ID" value="XP_037799971.1"/>
    <property type="gene ID" value="LOC119594951"/>
</dbReference>
<dbReference type="EnsemblMetazoa" id="XM_037944044.1">
    <property type="protein sequence ID" value="XP_037799972.1"/>
    <property type="gene ID" value="LOC119594951"/>
</dbReference>
<dbReference type="EnsemblMetazoa" id="XM_037944045.1">
    <property type="protein sequence ID" value="XP_037799973.1"/>
    <property type="gene ID" value="LOC119594951"/>
</dbReference>
<dbReference type="OrthoDB" id="128924at2759"/>
<dbReference type="GO" id="GO:0042803">
    <property type="term" value="F:protein homodimerization activity"/>
    <property type="evidence" value="ECO:0000250"/>
    <property type="project" value="UniProtKB"/>
</dbReference>
<dbReference type="GO" id="GO:0040011">
    <property type="term" value="P:locomotion"/>
    <property type="evidence" value="ECO:0000250"/>
    <property type="project" value="UniProtKB"/>
</dbReference>
<dbReference type="GO" id="GO:0003012">
    <property type="term" value="P:muscle system process"/>
    <property type="evidence" value="ECO:0000270"/>
    <property type="project" value="UniProtKB"/>
</dbReference>
<dbReference type="GO" id="GO:0006937">
    <property type="term" value="P:regulation of muscle contraction"/>
    <property type="evidence" value="ECO:0000250"/>
    <property type="project" value="UniProtKB"/>
</dbReference>
<dbReference type="FunFam" id="1.20.5.170:FF:000005">
    <property type="entry name" value="Tropomyosin alpha-1 chain"/>
    <property type="match status" value="1"/>
</dbReference>
<dbReference type="FunFam" id="1.20.5.170:FF:000001">
    <property type="entry name" value="Tropomyosin alpha-1 chain isoform 1"/>
    <property type="match status" value="1"/>
</dbReference>
<dbReference type="FunFam" id="1.20.5.340:FF:000001">
    <property type="entry name" value="Tropomyosin alpha-1 chain isoform 2"/>
    <property type="match status" value="1"/>
</dbReference>
<dbReference type="Gene3D" id="1.20.5.170">
    <property type="match status" value="2"/>
</dbReference>
<dbReference type="Gene3D" id="1.20.5.340">
    <property type="match status" value="1"/>
</dbReference>
<dbReference type="InterPro" id="IPR000533">
    <property type="entry name" value="Tropomyosin"/>
</dbReference>
<dbReference type="PANTHER" id="PTHR19269">
    <property type="entry name" value="TROPOMYOSIN"/>
    <property type="match status" value="1"/>
</dbReference>
<dbReference type="Pfam" id="PF00261">
    <property type="entry name" value="Tropomyosin"/>
    <property type="match status" value="1"/>
</dbReference>
<dbReference type="PRINTS" id="PR00194">
    <property type="entry name" value="TROPOMYOSIN"/>
</dbReference>
<dbReference type="SUPFAM" id="SSF57997">
    <property type="entry name" value="Tropomyosin"/>
    <property type="match status" value="1"/>
</dbReference>
<dbReference type="PROSITE" id="PS00326">
    <property type="entry name" value="TROPOMYOSIN"/>
    <property type="match status" value="1"/>
</dbReference>
<keyword id="KW-0007">Acetylation</keyword>
<keyword id="KW-0020">Allergen</keyword>
<keyword id="KW-0175">Coiled coil</keyword>
<keyword id="KW-0903">Direct protein sequencing</keyword>
<keyword id="KW-0514">Muscle protein</keyword>
<keyword id="KW-0677">Repeat</keyword>
<evidence type="ECO:0000250" key="1">
    <source>
        <dbReference type="UniProtKB" id="A2V735"/>
    </source>
</evidence>
<evidence type="ECO:0000250" key="2">
    <source>
        <dbReference type="UniProtKB" id="O44119"/>
    </source>
</evidence>
<evidence type="ECO:0000250" key="3">
    <source>
        <dbReference type="UniProtKB" id="Q22866"/>
    </source>
</evidence>
<evidence type="ECO:0000255" key="4"/>
<evidence type="ECO:0000256" key="5">
    <source>
        <dbReference type="SAM" id="MobiDB-lite"/>
    </source>
</evidence>
<evidence type="ECO:0000269" key="6">
    <source>
    </source>
</evidence>
<evidence type="ECO:0000269" key="7">
    <source>
    </source>
</evidence>
<evidence type="ECO:0000269" key="8">
    <source ref="3"/>
</evidence>
<evidence type="ECO:0000303" key="9">
    <source>
    </source>
</evidence>
<evidence type="ECO:0000303" key="10">
    <source>
    </source>
</evidence>
<evidence type="ECO:0000303" key="11">
    <source ref="3"/>
</evidence>
<evidence type="ECO:0000305" key="12"/>
<evidence type="ECO:0000312" key="13">
    <source>
        <dbReference type="EMBL" id="AAX37288.1"/>
    </source>
</evidence>
<evidence type="ECO:0000312" key="14">
    <source>
        <dbReference type="EMBL" id="BAF47262.1"/>
    </source>
</evidence>
<organism>
    <name type="scientific">Penaeus monodon</name>
    <name type="common">Giant tiger prawn</name>
    <dbReference type="NCBI Taxonomy" id="6687"/>
    <lineage>
        <taxon>Eukaryota</taxon>
        <taxon>Metazoa</taxon>
        <taxon>Ecdysozoa</taxon>
        <taxon>Arthropoda</taxon>
        <taxon>Crustacea</taxon>
        <taxon>Multicrustacea</taxon>
        <taxon>Malacostraca</taxon>
        <taxon>Eumalacostraca</taxon>
        <taxon>Eucarida</taxon>
        <taxon>Decapoda</taxon>
        <taxon>Dendrobranchiata</taxon>
        <taxon>Penaeoidea</taxon>
        <taxon>Penaeidae</taxon>
        <taxon>Penaeus</taxon>
    </lineage>
</organism>